<accession>Q1MHJ8</accession>
<protein>
    <recommendedName>
        <fullName evidence="1">Putative pre-16S rRNA nuclease</fullName>
        <ecNumber evidence="1">3.1.-.-</ecNumber>
    </recommendedName>
</protein>
<proteinExistence type="inferred from homology"/>
<sequence length="164" mass="17923">MTVLTIEEMAETLAPRQAIAGLDLGTKTIGLSMSDLGRRFATPRTVIRRVKFAIDAQALLDFAQSEKVAGFVIGLPMNMDGSAGPRVQATRAFVRNMEQKTALPFVYWDERLSTVAAERTLLEMDVSRAKRAERIDSAAASFILQGALDRLSLLARSDGDEFSA</sequence>
<reference key="1">
    <citation type="journal article" date="2006" name="Genome Biol.">
        <title>The genome of Rhizobium leguminosarum has recognizable core and accessory components.</title>
        <authorList>
            <person name="Young J.P.W."/>
            <person name="Crossman L.C."/>
            <person name="Johnston A.W.B."/>
            <person name="Thomson N.R."/>
            <person name="Ghazoui Z.F."/>
            <person name="Hull K.H."/>
            <person name="Wexler M."/>
            <person name="Curson A.R.J."/>
            <person name="Todd J.D."/>
            <person name="Poole P.S."/>
            <person name="Mauchline T.H."/>
            <person name="East A.K."/>
            <person name="Quail M.A."/>
            <person name="Churcher C."/>
            <person name="Arrowsmith C."/>
            <person name="Cherevach I."/>
            <person name="Chillingworth T."/>
            <person name="Clarke K."/>
            <person name="Cronin A."/>
            <person name="Davis P."/>
            <person name="Fraser A."/>
            <person name="Hance Z."/>
            <person name="Hauser H."/>
            <person name="Jagels K."/>
            <person name="Moule S."/>
            <person name="Mungall K."/>
            <person name="Norbertczak H."/>
            <person name="Rabbinowitsch E."/>
            <person name="Sanders M."/>
            <person name="Simmonds M."/>
            <person name="Whitehead S."/>
            <person name="Parkhill J."/>
        </authorList>
    </citation>
    <scope>NUCLEOTIDE SEQUENCE [LARGE SCALE GENOMIC DNA]</scope>
    <source>
        <strain>DSM 114642 / LMG 32736 / 3841</strain>
    </source>
</reference>
<feature type="chain" id="PRO_0000257574" description="Putative pre-16S rRNA nuclease">
    <location>
        <begin position="1"/>
        <end position="164"/>
    </location>
</feature>
<keyword id="KW-0963">Cytoplasm</keyword>
<keyword id="KW-0378">Hydrolase</keyword>
<keyword id="KW-0540">Nuclease</keyword>
<keyword id="KW-0690">Ribosome biogenesis</keyword>
<evidence type="ECO:0000255" key="1">
    <source>
        <dbReference type="HAMAP-Rule" id="MF_00651"/>
    </source>
</evidence>
<dbReference type="EC" id="3.1.-.-" evidence="1"/>
<dbReference type="EMBL" id="AM236080">
    <property type="protein sequence ID" value="CAK07565.1"/>
    <property type="molecule type" value="Genomic_DNA"/>
</dbReference>
<dbReference type="SMR" id="Q1MHJ8"/>
<dbReference type="EnsemblBacteria" id="CAK07565">
    <property type="protein sequence ID" value="CAK07565"/>
    <property type="gene ID" value="RL2073"/>
</dbReference>
<dbReference type="KEGG" id="rle:RL2073"/>
<dbReference type="eggNOG" id="COG0816">
    <property type="taxonomic scope" value="Bacteria"/>
</dbReference>
<dbReference type="HOGENOM" id="CLU_098240_1_1_5"/>
<dbReference type="Proteomes" id="UP000006575">
    <property type="component" value="Chromosome"/>
</dbReference>
<dbReference type="GO" id="GO:0005829">
    <property type="term" value="C:cytosol"/>
    <property type="evidence" value="ECO:0007669"/>
    <property type="project" value="TreeGrafter"/>
</dbReference>
<dbReference type="GO" id="GO:0004518">
    <property type="term" value="F:nuclease activity"/>
    <property type="evidence" value="ECO:0007669"/>
    <property type="project" value="UniProtKB-KW"/>
</dbReference>
<dbReference type="GO" id="GO:0000967">
    <property type="term" value="P:rRNA 5'-end processing"/>
    <property type="evidence" value="ECO:0007669"/>
    <property type="project" value="UniProtKB-UniRule"/>
</dbReference>
<dbReference type="CDD" id="cd16964">
    <property type="entry name" value="YqgF"/>
    <property type="match status" value="1"/>
</dbReference>
<dbReference type="Gene3D" id="3.30.420.140">
    <property type="entry name" value="YqgF/RNase H-like domain"/>
    <property type="match status" value="1"/>
</dbReference>
<dbReference type="HAMAP" id="MF_00651">
    <property type="entry name" value="Nuclease_YqgF"/>
    <property type="match status" value="1"/>
</dbReference>
<dbReference type="InterPro" id="IPR012337">
    <property type="entry name" value="RNaseH-like_sf"/>
</dbReference>
<dbReference type="InterPro" id="IPR005227">
    <property type="entry name" value="YqgF"/>
</dbReference>
<dbReference type="InterPro" id="IPR006641">
    <property type="entry name" value="YqgF/RNaseH-like_dom"/>
</dbReference>
<dbReference type="InterPro" id="IPR037027">
    <property type="entry name" value="YqgF/RNaseH-like_dom_sf"/>
</dbReference>
<dbReference type="NCBIfam" id="TIGR00250">
    <property type="entry name" value="RNAse_H_YqgF"/>
    <property type="match status" value="1"/>
</dbReference>
<dbReference type="PANTHER" id="PTHR33317">
    <property type="entry name" value="POLYNUCLEOTIDYL TRANSFERASE, RIBONUCLEASE H-LIKE SUPERFAMILY PROTEIN"/>
    <property type="match status" value="1"/>
</dbReference>
<dbReference type="PANTHER" id="PTHR33317:SF4">
    <property type="entry name" value="POLYNUCLEOTIDYL TRANSFERASE, RIBONUCLEASE H-LIKE SUPERFAMILY PROTEIN"/>
    <property type="match status" value="1"/>
</dbReference>
<dbReference type="Pfam" id="PF03652">
    <property type="entry name" value="RuvX"/>
    <property type="match status" value="1"/>
</dbReference>
<dbReference type="SMART" id="SM00732">
    <property type="entry name" value="YqgFc"/>
    <property type="match status" value="1"/>
</dbReference>
<dbReference type="SUPFAM" id="SSF53098">
    <property type="entry name" value="Ribonuclease H-like"/>
    <property type="match status" value="1"/>
</dbReference>
<gene>
    <name type="ordered locus">RL2073</name>
</gene>
<name>YQGF_RHIJ3</name>
<comment type="function">
    <text evidence="1">Could be a nuclease involved in processing of the 5'-end of pre-16S rRNA.</text>
</comment>
<comment type="subcellular location">
    <subcellularLocation>
        <location evidence="1">Cytoplasm</location>
    </subcellularLocation>
</comment>
<comment type="similarity">
    <text evidence="1">Belongs to the YqgF nuclease family.</text>
</comment>
<organism>
    <name type="scientific">Rhizobium johnstonii (strain DSM 114642 / LMG 32736 / 3841)</name>
    <name type="common">Rhizobium leguminosarum bv. viciae</name>
    <dbReference type="NCBI Taxonomy" id="216596"/>
    <lineage>
        <taxon>Bacteria</taxon>
        <taxon>Pseudomonadati</taxon>
        <taxon>Pseudomonadota</taxon>
        <taxon>Alphaproteobacteria</taxon>
        <taxon>Hyphomicrobiales</taxon>
        <taxon>Rhizobiaceae</taxon>
        <taxon>Rhizobium/Agrobacterium group</taxon>
        <taxon>Rhizobium</taxon>
        <taxon>Rhizobium johnstonii</taxon>
    </lineage>
</organism>